<name>RRF_SACD2</name>
<dbReference type="EMBL" id="CP000282">
    <property type="protein sequence ID" value="ABD81854.1"/>
    <property type="status" value="ALT_INIT"/>
    <property type="molecule type" value="Genomic_DNA"/>
</dbReference>
<dbReference type="RefSeq" id="WP_041325775.1">
    <property type="nucleotide sequence ID" value="NC_007912.1"/>
</dbReference>
<dbReference type="SMR" id="Q21HH5"/>
<dbReference type="STRING" id="203122.Sde_2594"/>
<dbReference type="GeneID" id="98614257"/>
<dbReference type="KEGG" id="sde:Sde_2594"/>
<dbReference type="eggNOG" id="COG0233">
    <property type="taxonomic scope" value="Bacteria"/>
</dbReference>
<dbReference type="HOGENOM" id="CLU_073981_2_1_6"/>
<dbReference type="OrthoDB" id="9804006at2"/>
<dbReference type="Proteomes" id="UP000001947">
    <property type="component" value="Chromosome"/>
</dbReference>
<dbReference type="GO" id="GO:0005829">
    <property type="term" value="C:cytosol"/>
    <property type="evidence" value="ECO:0007669"/>
    <property type="project" value="GOC"/>
</dbReference>
<dbReference type="GO" id="GO:0043023">
    <property type="term" value="F:ribosomal large subunit binding"/>
    <property type="evidence" value="ECO:0007669"/>
    <property type="project" value="TreeGrafter"/>
</dbReference>
<dbReference type="GO" id="GO:0002184">
    <property type="term" value="P:cytoplasmic translational termination"/>
    <property type="evidence" value="ECO:0007669"/>
    <property type="project" value="TreeGrafter"/>
</dbReference>
<dbReference type="CDD" id="cd00520">
    <property type="entry name" value="RRF"/>
    <property type="match status" value="1"/>
</dbReference>
<dbReference type="FunFam" id="1.10.132.20:FF:000001">
    <property type="entry name" value="Ribosome-recycling factor"/>
    <property type="match status" value="1"/>
</dbReference>
<dbReference type="FunFam" id="3.30.1360.40:FF:000001">
    <property type="entry name" value="Ribosome-recycling factor"/>
    <property type="match status" value="1"/>
</dbReference>
<dbReference type="Gene3D" id="3.30.1360.40">
    <property type="match status" value="1"/>
</dbReference>
<dbReference type="Gene3D" id="1.10.132.20">
    <property type="entry name" value="Ribosome-recycling factor"/>
    <property type="match status" value="1"/>
</dbReference>
<dbReference type="HAMAP" id="MF_00040">
    <property type="entry name" value="RRF"/>
    <property type="match status" value="1"/>
</dbReference>
<dbReference type="InterPro" id="IPR002661">
    <property type="entry name" value="Ribosome_recyc_fac"/>
</dbReference>
<dbReference type="InterPro" id="IPR023584">
    <property type="entry name" value="Ribosome_recyc_fac_dom"/>
</dbReference>
<dbReference type="InterPro" id="IPR036191">
    <property type="entry name" value="RRF_sf"/>
</dbReference>
<dbReference type="NCBIfam" id="TIGR00496">
    <property type="entry name" value="frr"/>
    <property type="match status" value="1"/>
</dbReference>
<dbReference type="PANTHER" id="PTHR20982:SF3">
    <property type="entry name" value="MITOCHONDRIAL RIBOSOME RECYCLING FACTOR PSEUDO 1"/>
    <property type="match status" value="1"/>
</dbReference>
<dbReference type="PANTHER" id="PTHR20982">
    <property type="entry name" value="RIBOSOME RECYCLING FACTOR"/>
    <property type="match status" value="1"/>
</dbReference>
<dbReference type="Pfam" id="PF01765">
    <property type="entry name" value="RRF"/>
    <property type="match status" value="1"/>
</dbReference>
<dbReference type="SUPFAM" id="SSF55194">
    <property type="entry name" value="Ribosome recycling factor, RRF"/>
    <property type="match status" value="1"/>
</dbReference>
<gene>
    <name evidence="1" type="primary">frr</name>
    <name type="ordered locus">Sde_2594</name>
</gene>
<comment type="function">
    <text evidence="1">Responsible for the release of ribosomes from messenger RNA at the termination of protein biosynthesis. May increase the efficiency of translation by recycling ribosomes from one round of translation to another.</text>
</comment>
<comment type="subcellular location">
    <subcellularLocation>
        <location evidence="1">Cytoplasm</location>
    </subcellularLocation>
</comment>
<comment type="similarity">
    <text evidence="1">Belongs to the RRF family.</text>
</comment>
<comment type="sequence caution" evidence="2">
    <conflict type="erroneous initiation">
        <sequence resource="EMBL-CDS" id="ABD81854"/>
    </conflict>
</comment>
<keyword id="KW-0963">Cytoplasm</keyword>
<keyword id="KW-0648">Protein biosynthesis</keyword>
<keyword id="KW-1185">Reference proteome</keyword>
<proteinExistence type="inferred from homology"/>
<organism>
    <name type="scientific">Saccharophagus degradans (strain 2-40 / ATCC 43961 / DSM 17024)</name>
    <dbReference type="NCBI Taxonomy" id="203122"/>
    <lineage>
        <taxon>Bacteria</taxon>
        <taxon>Pseudomonadati</taxon>
        <taxon>Pseudomonadota</taxon>
        <taxon>Gammaproteobacteria</taxon>
        <taxon>Cellvibrionales</taxon>
        <taxon>Cellvibrionaceae</taxon>
        <taxon>Saccharophagus</taxon>
    </lineage>
</organism>
<reference key="1">
    <citation type="journal article" date="2008" name="PLoS Genet.">
        <title>Complete genome sequence of the complex carbohydrate-degrading marine bacterium, Saccharophagus degradans strain 2-40 T.</title>
        <authorList>
            <person name="Weiner R.M."/>
            <person name="Taylor L.E. II"/>
            <person name="Henrissat B."/>
            <person name="Hauser L."/>
            <person name="Land M."/>
            <person name="Coutinho P.M."/>
            <person name="Rancurel C."/>
            <person name="Saunders E.H."/>
            <person name="Longmire A.G."/>
            <person name="Zhang H."/>
            <person name="Bayer E.A."/>
            <person name="Gilbert H.J."/>
            <person name="Larimer F."/>
            <person name="Zhulin I.B."/>
            <person name="Ekborg N.A."/>
            <person name="Lamed R."/>
            <person name="Richardson P.M."/>
            <person name="Borovok I."/>
            <person name="Hutcheson S."/>
        </authorList>
    </citation>
    <scope>NUCLEOTIDE SEQUENCE [LARGE SCALE GENOMIC DNA]</scope>
    <source>
        <strain>2-40 / ATCC 43961 / DSM 17024</strain>
    </source>
</reference>
<feature type="chain" id="PRO_0000341039" description="Ribosome-recycling factor">
    <location>
        <begin position="1"/>
        <end position="185"/>
    </location>
</feature>
<accession>Q21HH5</accession>
<evidence type="ECO:0000255" key="1">
    <source>
        <dbReference type="HAMAP-Rule" id="MF_00040"/>
    </source>
</evidence>
<evidence type="ECO:0000305" key="2"/>
<protein>
    <recommendedName>
        <fullName evidence="1">Ribosome-recycling factor</fullName>
        <shortName evidence="1">RRF</shortName>
    </recommendedName>
    <alternativeName>
        <fullName evidence="1">Ribosome-releasing factor</fullName>
    </alternativeName>
</protein>
<sequence>MIDDIKSDSEERMSRAIEALGTHFNKIRTGRAHPSILDGVMVSYYGSATPLSQVANVTVLDARTLSISPWEKNIVPEIEKAIMKSDLGLNPVTTGDLIRVPMPMLTEETRKGYIKRARAEAESARVSIRNVRRDALAEVKALVKDKEISEDDERRAADEIQQITNKYVAEVDKALSAKEKDLMEI</sequence>